<feature type="signal peptide" evidence="3">
    <location>
        <begin position="1"/>
        <end position="34"/>
    </location>
</feature>
<feature type="chain" id="PRO_0000013581" description="Endoplasmic reticulum chaperone BiP">
    <location>
        <begin position="35"/>
        <end position="683"/>
    </location>
</feature>
<feature type="region of interest" description="Nucleotide-binding (NBD)" evidence="1">
    <location>
        <begin position="145"/>
        <end position="299"/>
    </location>
</feature>
<feature type="region of interest" description="Substrate-binding (SBD)" evidence="1">
    <location>
        <begin position="419"/>
        <end position="519"/>
    </location>
</feature>
<feature type="region of interest" description="Disordered" evidence="5">
    <location>
        <begin position="595"/>
        <end position="614"/>
    </location>
</feature>
<feature type="region of interest" description="Disordered" evidence="5">
    <location>
        <begin position="655"/>
        <end position="683"/>
    </location>
</feature>
<feature type="short sequence motif" description="Prevents secretion from ER" evidence="4">
    <location>
        <begin position="680"/>
        <end position="683"/>
    </location>
</feature>
<feature type="compositionally biased region" description="Acidic residues" evidence="5">
    <location>
        <begin position="668"/>
        <end position="683"/>
    </location>
</feature>
<feature type="binding site" evidence="1">
    <location>
        <begin position="57"/>
        <end position="60"/>
    </location>
    <ligand>
        <name>ATP</name>
        <dbReference type="ChEBI" id="CHEBI:30616"/>
    </ligand>
</feature>
<feature type="binding site" evidence="1">
    <location>
        <position position="116"/>
    </location>
    <ligand>
        <name>ATP</name>
        <dbReference type="ChEBI" id="CHEBI:30616"/>
    </ligand>
</feature>
<feature type="binding site" evidence="1">
    <location>
        <begin position="246"/>
        <end position="248"/>
    </location>
    <ligand>
        <name>ATP</name>
        <dbReference type="ChEBI" id="CHEBI:30616"/>
    </ligand>
</feature>
<feature type="binding site" evidence="1">
    <location>
        <begin position="312"/>
        <end position="319"/>
    </location>
    <ligand>
        <name>ATP</name>
        <dbReference type="ChEBI" id="CHEBI:30616"/>
    </ligand>
</feature>
<feature type="binding site" evidence="1">
    <location>
        <begin position="383"/>
        <end position="386"/>
    </location>
    <ligand>
        <name>ATP</name>
        <dbReference type="ChEBI" id="CHEBI:30616"/>
    </ligand>
</feature>
<dbReference type="EC" id="3.6.4.10" evidence="1"/>
<dbReference type="EMBL" id="CR382133">
    <property type="protein sequence ID" value="CAG84345.1"/>
    <property type="molecule type" value="Genomic_DNA"/>
</dbReference>
<dbReference type="RefSeq" id="XP_456398.1">
    <property type="nucleotide sequence ID" value="XM_456398.1"/>
</dbReference>
<dbReference type="SMR" id="Q6BZH1"/>
<dbReference type="FunCoup" id="Q6BZH1">
    <property type="interactions" value="1404"/>
</dbReference>
<dbReference type="STRING" id="284592.Q6BZH1"/>
<dbReference type="GeneID" id="2899287"/>
<dbReference type="KEGG" id="dha:DEHA2A01364g"/>
<dbReference type="VEuPathDB" id="FungiDB:DEHA2A01364g"/>
<dbReference type="eggNOG" id="KOG0100">
    <property type="taxonomic scope" value="Eukaryota"/>
</dbReference>
<dbReference type="HOGENOM" id="CLU_005965_3_0_1"/>
<dbReference type="InParanoid" id="Q6BZH1"/>
<dbReference type="OMA" id="VQRDIKH"/>
<dbReference type="OrthoDB" id="2401965at2759"/>
<dbReference type="Proteomes" id="UP000000599">
    <property type="component" value="Chromosome A"/>
</dbReference>
<dbReference type="GO" id="GO:0099021">
    <property type="term" value="C:cortical endoplasmic reticulum lumen"/>
    <property type="evidence" value="ECO:0007669"/>
    <property type="project" value="EnsemblFungi"/>
</dbReference>
<dbReference type="GO" id="GO:0034099">
    <property type="term" value="C:luminal surveillance complex"/>
    <property type="evidence" value="ECO:0007669"/>
    <property type="project" value="EnsemblFungi"/>
</dbReference>
<dbReference type="GO" id="GO:0031965">
    <property type="term" value="C:nuclear membrane"/>
    <property type="evidence" value="ECO:0007669"/>
    <property type="project" value="EnsemblFungi"/>
</dbReference>
<dbReference type="GO" id="GO:0099020">
    <property type="term" value="C:perinuclear endoplasmic reticulum lumen"/>
    <property type="evidence" value="ECO:0007669"/>
    <property type="project" value="EnsemblFungi"/>
</dbReference>
<dbReference type="GO" id="GO:0005524">
    <property type="term" value="F:ATP binding"/>
    <property type="evidence" value="ECO:0007669"/>
    <property type="project" value="UniProtKB-KW"/>
</dbReference>
<dbReference type="GO" id="GO:0016887">
    <property type="term" value="F:ATP hydrolysis activity"/>
    <property type="evidence" value="ECO:0007669"/>
    <property type="project" value="EnsemblFungi"/>
</dbReference>
<dbReference type="GO" id="GO:0140662">
    <property type="term" value="F:ATP-dependent protein folding chaperone"/>
    <property type="evidence" value="ECO:0007669"/>
    <property type="project" value="InterPro"/>
</dbReference>
<dbReference type="GO" id="GO:0015450">
    <property type="term" value="F:protein-transporting ATPase activity"/>
    <property type="evidence" value="ECO:0007669"/>
    <property type="project" value="EnsemblFungi"/>
</dbReference>
<dbReference type="GO" id="GO:0051082">
    <property type="term" value="F:unfolded protein binding"/>
    <property type="evidence" value="ECO:0007669"/>
    <property type="project" value="EnsemblFungi"/>
</dbReference>
<dbReference type="GO" id="GO:0036503">
    <property type="term" value="P:ERAD pathway"/>
    <property type="evidence" value="ECO:0007669"/>
    <property type="project" value="EnsemblFungi"/>
</dbReference>
<dbReference type="GO" id="GO:0070880">
    <property type="term" value="P:fungal-type cell wall beta-glucan biosynthetic process"/>
    <property type="evidence" value="ECO:0007669"/>
    <property type="project" value="EnsemblFungi"/>
</dbReference>
<dbReference type="GO" id="GO:0036498">
    <property type="term" value="P:IRE1-mediated unfolded protein response"/>
    <property type="evidence" value="ECO:0007669"/>
    <property type="project" value="EnsemblFungi"/>
</dbReference>
<dbReference type="GO" id="GO:0000742">
    <property type="term" value="P:karyogamy involved in conjugation with cellular fusion"/>
    <property type="evidence" value="ECO:0007669"/>
    <property type="project" value="EnsemblFungi"/>
</dbReference>
<dbReference type="GO" id="GO:0031204">
    <property type="term" value="P:post-translational protein targeting to membrane, translocation"/>
    <property type="evidence" value="ECO:0007669"/>
    <property type="project" value="EnsemblFungi"/>
</dbReference>
<dbReference type="GO" id="GO:0006616">
    <property type="term" value="P:SRP-dependent cotranslational protein targeting to membrane, translocation"/>
    <property type="evidence" value="ECO:0007669"/>
    <property type="project" value="EnsemblFungi"/>
</dbReference>
<dbReference type="CDD" id="cd10241">
    <property type="entry name" value="ASKHA_NBD_HSP70_BiP"/>
    <property type="match status" value="1"/>
</dbReference>
<dbReference type="FunFam" id="1.20.1270.10:FF:000009">
    <property type="entry name" value="DnaK-type molecular chaperone BiP"/>
    <property type="match status" value="1"/>
</dbReference>
<dbReference type="FunFam" id="2.60.34.10:FF:000002">
    <property type="entry name" value="Heat shock 70 kDa"/>
    <property type="match status" value="1"/>
</dbReference>
<dbReference type="FunFam" id="3.90.640.10:FF:000002">
    <property type="entry name" value="Heat shock 70 kDa"/>
    <property type="match status" value="1"/>
</dbReference>
<dbReference type="FunFam" id="3.30.30.30:FF:000002">
    <property type="entry name" value="Heat shock 70 kDa protein 4"/>
    <property type="match status" value="1"/>
</dbReference>
<dbReference type="FunFam" id="3.30.420.40:FF:000026">
    <property type="entry name" value="Heat shock protein 70"/>
    <property type="match status" value="1"/>
</dbReference>
<dbReference type="Gene3D" id="1.20.1270.10">
    <property type="match status" value="1"/>
</dbReference>
<dbReference type="Gene3D" id="3.30.30.30">
    <property type="match status" value="1"/>
</dbReference>
<dbReference type="Gene3D" id="3.30.420.40">
    <property type="match status" value="2"/>
</dbReference>
<dbReference type="Gene3D" id="3.90.640.10">
    <property type="entry name" value="Actin, Chain A, domain 4"/>
    <property type="match status" value="1"/>
</dbReference>
<dbReference type="Gene3D" id="2.60.34.10">
    <property type="entry name" value="Substrate Binding Domain Of DNAk, Chain A, domain 1"/>
    <property type="match status" value="1"/>
</dbReference>
<dbReference type="InterPro" id="IPR043129">
    <property type="entry name" value="ATPase_NBD"/>
</dbReference>
<dbReference type="InterPro" id="IPR042050">
    <property type="entry name" value="BIP_NBD"/>
</dbReference>
<dbReference type="InterPro" id="IPR018181">
    <property type="entry name" value="Heat_shock_70_CS"/>
</dbReference>
<dbReference type="InterPro" id="IPR029048">
    <property type="entry name" value="HSP70_C_sf"/>
</dbReference>
<dbReference type="InterPro" id="IPR029047">
    <property type="entry name" value="HSP70_peptide-bd_sf"/>
</dbReference>
<dbReference type="InterPro" id="IPR013126">
    <property type="entry name" value="Hsp_70_fam"/>
</dbReference>
<dbReference type="NCBIfam" id="NF001413">
    <property type="entry name" value="PRK00290.1"/>
    <property type="match status" value="1"/>
</dbReference>
<dbReference type="PANTHER" id="PTHR19375">
    <property type="entry name" value="HEAT SHOCK PROTEIN 70KDA"/>
    <property type="match status" value="1"/>
</dbReference>
<dbReference type="Pfam" id="PF00012">
    <property type="entry name" value="HSP70"/>
    <property type="match status" value="1"/>
</dbReference>
<dbReference type="PRINTS" id="PR00301">
    <property type="entry name" value="HEATSHOCK70"/>
</dbReference>
<dbReference type="SUPFAM" id="SSF53067">
    <property type="entry name" value="Actin-like ATPase domain"/>
    <property type="match status" value="2"/>
</dbReference>
<dbReference type="SUPFAM" id="SSF100934">
    <property type="entry name" value="Heat shock protein 70kD (HSP70), C-terminal subdomain"/>
    <property type="match status" value="1"/>
</dbReference>
<dbReference type="SUPFAM" id="SSF100920">
    <property type="entry name" value="Heat shock protein 70kD (HSP70), peptide-binding domain"/>
    <property type="match status" value="1"/>
</dbReference>
<dbReference type="PROSITE" id="PS00014">
    <property type="entry name" value="ER_TARGET"/>
    <property type="match status" value="1"/>
</dbReference>
<dbReference type="PROSITE" id="PS00297">
    <property type="entry name" value="HSP70_1"/>
    <property type="match status" value="1"/>
</dbReference>
<dbReference type="PROSITE" id="PS00329">
    <property type="entry name" value="HSP70_2"/>
    <property type="match status" value="1"/>
</dbReference>
<dbReference type="PROSITE" id="PS01036">
    <property type="entry name" value="HSP70_3"/>
    <property type="match status" value="1"/>
</dbReference>
<gene>
    <name type="primary">KAR2</name>
    <name type="ordered locus">DEHA2A01364g</name>
</gene>
<comment type="function">
    <text evidence="2">Probably plays a role in facilitating the assembly of multimeric protein complexes inside the ER. Is required for secretory polypeptide translocation. May physically associate with SEC63 protein in the endoplasmic reticulum and this interaction may be regulated by ATP hydrolysis.</text>
</comment>
<comment type="catalytic activity">
    <reaction evidence="1">
        <text>ATP + H2O = ADP + phosphate + H(+)</text>
        <dbReference type="Rhea" id="RHEA:13065"/>
        <dbReference type="ChEBI" id="CHEBI:15377"/>
        <dbReference type="ChEBI" id="CHEBI:15378"/>
        <dbReference type="ChEBI" id="CHEBI:30616"/>
        <dbReference type="ChEBI" id="CHEBI:43474"/>
        <dbReference type="ChEBI" id="CHEBI:456216"/>
        <dbReference type="EC" id="3.6.4.10"/>
    </reaction>
</comment>
<comment type="activity regulation">
    <text evidence="1">The chaperone activity is regulated by ATP-induced allosteric coupling of the nucleotide-binding (NBD) and substrate-binding (SBD) domains. In the ADP-bound and nucleotide-free (apo) states, the two domains have little interaction. In contrast, in the ATP-bound state the two domains are tightly coupled, which results in drastically accelerated kinetics in both binding and release of polypeptide substrates. J domain-containing co-chaperones stimulate the ATPase activity and are required for efficient substrate recognition.</text>
</comment>
<comment type="subcellular location">
    <subcellularLocation>
        <location evidence="2 4">Endoplasmic reticulum lumen</location>
    </subcellularLocation>
</comment>
<comment type="similarity">
    <text evidence="6">Belongs to the heat shock protein 70 family.</text>
</comment>
<evidence type="ECO:0000250" key="1">
    <source>
        <dbReference type="UniProtKB" id="P11021"/>
    </source>
</evidence>
<evidence type="ECO:0000250" key="2">
    <source>
        <dbReference type="UniProtKB" id="P16474"/>
    </source>
</evidence>
<evidence type="ECO:0000255" key="3"/>
<evidence type="ECO:0000255" key="4">
    <source>
        <dbReference type="PROSITE-ProRule" id="PRU10138"/>
    </source>
</evidence>
<evidence type="ECO:0000256" key="5">
    <source>
        <dbReference type="SAM" id="MobiDB-lite"/>
    </source>
</evidence>
<evidence type="ECO:0000305" key="6"/>
<accession>Q6BZH1</accession>
<sequence>MLKVNSRFWISGFTLAYVLLAVILPLLTPNQGQALAAEGETDNDTESYGTVIGIDLGTTYSCVGVMKNGKVEILANDQGNRITPSYVAFTPEERLIGDAAKNQASSNVENTVFDIKRLIGLKYNDKMVQKEIKHLPYKIDKKDGKPVVKVEFNDETKTFSPEEISGMILTKMKSIAEEYMGKKITHAVVTVPAYFNDAQRQATKDAGTIAGLNVLRIVNEPTAAAIAYGLDKTEGEKQIIVYDLGGGTFDVSLLSIEGGVFEVLATAGDTHLGGEDFDFKVVRYLSSVFKKKHNIDISGNSKAISKLKRETEKAKRTLSSQMSTRIEIDSFVDGIDFSETLSRAKFEELNIESFKKTLKPVQQVLKDAGFKKSDVDDIVLVGGSTRIPKVQELLEKFFDGKKASKGINPDEAVAYGAAVQAGVLSGEEGVHDIVLLDVNPLTLGIETTGGVMTTLINRNTAIPTKKSQIFSTAADNQPTVLIQVFEGERALAKDNNKLGKFELTSIPPAPRGVPQIEVTFSLDANGILKVEAMDKGTGKSESITITNDKGRLSKEDIDRMVEEAEKYAEQDSELKAKIESRNSLENYAHMLKGQVKDESENGLGSKLNDDDKETLDDAIKETLEFIEDNYDSATSEEFEEQKQKLIDVASPITSKLYGGGAGGADEAQFGDDDSDDEFVHDEL</sequence>
<protein>
    <recommendedName>
        <fullName evidence="6">Endoplasmic reticulum chaperone BiP</fullName>
        <ecNumber evidence="1">3.6.4.10</ecNumber>
    </recommendedName>
    <alternativeName>
        <fullName evidence="6">Immunoglobulin heavy chain-binding protein homolog</fullName>
        <shortName evidence="6">BiP</shortName>
    </alternativeName>
</protein>
<proteinExistence type="inferred from homology"/>
<name>BIP_DEBHA</name>
<reference key="1">
    <citation type="journal article" date="2004" name="Nature">
        <title>Genome evolution in yeasts.</title>
        <authorList>
            <person name="Dujon B."/>
            <person name="Sherman D."/>
            <person name="Fischer G."/>
            <person name="Durrens P."/>
            <person name="Casaregola S."/>
            <person name="Lafontaine I."/>
            <person name="de Montigny J."/>
            <person name="Marck C."/>
            <person name="Neuveglise C."/>
            <person name="Talla E."/>
            <person name="Goffard N."/>
            <person name="Frangeul L."/>
            <person name="Aigle M."/>
            <person name="Anthouard V."/>
            <person name="Babour A."/>
            <person name="Barbe V."/>
            <person name="Barnay S."/>
            <person name="Blanchin S."/>
            <person name="Beckerich J.-M."/>
            <person name="Beyne E."/>
            <person name="Bleykasten C."/>
            <person name="Boisrame A."/>
            <person name="Boyer J."/>
            <person name="Cattolico L."/>
            <person name="Confanioleri F."/>
            <person name="de Daruvar A."/>
            <person name="Despons L."/>
            <person name="Fabre E."/>
            <person name="Fairhead C."/>
            <person name="Ferry-Dumazet H."/>
            <person name="Groppi A."/>
            <person name="Hantraye F."/>
            <person name="Hennequin C."/>
            <person name="Jauniaux N."/>
            <person name="Joyet P."/>
            <person name="Kachouri R."/>
            <person name="Kerrest A."/>
            <person name="Koszul R."/>
            <person name="Lemaire M."/>
            <person name="Lesur I."/>
            <person name="Ma L."/>
            <person name="Muller H."/>
            <person name="Nicaud J.-M."/>
            <person name="Nikolski M."/>
            <person name="Oztas S."/>
            <person name="Ozier-Kalogeropoulos O."/>
            <person name="Pellenz S."/>
            <person name="Potier S."/>
            <person name="Richard G.-F."/>
            <person name="Straub M.-L."/>
            <person name="Suleau A."/>
            <person name="Swennen D."/>
            <person name="Tekaia F."/>
            <person name="Wesolowski-Louvel M."/>
            <person name="Westhof E."/>
            <person name="Wirth B."/>
            <person name="Zeniou-Meyer M."/>
            <person name="Zivanovic Y."/>
            <person name="Bolotin-Fukuhara M."/>
            <person name="Thierry A."/>
            <person name="Bouchier C."/>
            <person name="Caudron B."/>
            <person name="Scarpelli C."/>
            <person name="Gaillardin C."/>
            <person name="Weissenbach J."/>
            <person name="Wincker P."/>
            <person name="Souciet J.-L."/>
        </authorList>
    </citation>
    <scope>NUCLEOTIDE SEQUENCE [LARGE SCALE GENOMIC DNA]</scope>
    <source>
        <strain>ATCC 36239 / CBS 767 / BCRC 21394 / JCM 1990 / NBRC 0083 / IGC 2968</strain>
    </source>
</reference>
<keyword id="KW-0067">ATP-binding</keyword>
<keyword id="KW-0143">Chaperone</keyword>
<keyword id="KW-0256">Endoplasmic reticulum</keyword>
<keyword id="KW-0378">Hydrolase</keyword>
<keyword id="KW-0547">Nucleotide-binding</keyword>
<keyword id="KW-1185">Reference proteome</keyword>
<keyword id="KW-0732">Signal</keyword>
<keyword id="KW-0346">Stress response</keyword>
<organism>
    <name type="scientific">Debaryomyces hansenii (strain ATCC 36239 / CBS 767 / BCRC 21394 / JCM 1990 / NBRC 0083 / IGC 2968)</name>
    <name type="common">Yeast</name>
    <name type="synonym">Torulaspora hansenii</name>
    <dbReference type="NCBI Taxonomy" id="284592"/>
    <lineage>
        <taxon>Eukaryota</taxon>
        <taxon>Fungi</taxon>
        <taxon>Dikarya</taxon>
        <taxon>Ascomycota</taxon>
        <taxon>Saccharomycotina</taxon>
        <taxon>Pichiomycetes</taxon>
        <taxon>Debaryomycetaceae</taxon>
        <taxon>Debaryomyces</taxon>
    </lineage>
</organism>